<organism>
    <name type="scientific">Synechococcus sp. (strain JA-3-3Ab)</name>
    <name type="common">Cyanobacteria bacterium Yellowstone A-Prime</name>
    <dbReference type="NCBI Taxonomy" id="321327"/>
    <lineage>
        <taxon>Bacteria</taxon>
        <taxon>Bacillati</taxon>
        <taxon>Cyanobacteriota</taxon>
        <taxon>Cyanophyceae</taxon>
        <taxon>Synechococcales</taxon>
        <taxon>Synechococcaceae</taxon>
        <taxon>Synechococcus</taxon>
    </lineage>
</organism>
<name>RS20_SYNJA</name>
<gene>
    <name evidence="1" type="primary">rpsT</name>
    <name evidence="1" type="synonym">rps20</name>
    <name type="ordered locus">CYA_0925</name>
</gene>
<keyword id="KW-0687">Ribonucleoprotein</keyword>
<keyword id="KW-0689">Ribosomal protein</keyword>
<keyword id="KW-0694">RNA-binding</keyword>
<keyword id="KW-0699">rRNA-binding</keyword>
<protein>
    <recommendedName>
        <fullName evidence="1">Small ribosomal subunit protein bS20</fullName>
    </recommendedName>
    <alternativeName>
        <fullName evidence="2">30S ribosomal protein S20</fullName>
    </alternativeName>
</protein>
<feature type="chain" id="PRO_0000236460" description="Small ribosomal subunit protein bS20">
    <location>
        <begin position="1"/>
        <end position="100"/>
    </location>
</feature>
<accession>Q2JVV4</accession>
<evidence type="ECO:0000255" key="1">
    <source>
        <dbReference type="HAMAP-Rule" id="MF_00500"/>
    </source>
</evidence>
<evidence type="ECO:0000305" key="2"/>
<reference key="1">
    <citation type="journal article" date="2007" name="ISME J.">
        <title>Population level functional diversity in a microbial community revealed by comparative genomic and metagenomic analyses.</title>
        <authorList>
            <person name="Bhaya D."/>
            <person name="Grossman A.R."/>
            <person name="Steunou A.-S."/>
            <person name="Khuri N."/>
            <person name="Cohan F.M."/>
            <person name="Hamamura N."/>
            <person name="Melendrez M.C."/>
            <person name="Bateson M.M."/>
            <person name="Ward D.M."/>
            <person name="Heidelberg J.F."/>
        </authorList>
    </citation>
    <scope>NUCLEOTIDE SEQUENCE [LARGE SCALE GENOMIC DNA]</scope>
    <source>
        <strain>JA-3-3Ab</strain>
    </source>
</reference>
<comment type="function">
    <text evidence="1">Binds directly to 16S ribosomal RNA.</text>
</comment>
<comment type="similarity">
    <text evidence="1">Belongs to the bacterial ribosomal protein bS20 family.</text>
</comment>
<proteinExistence type="inferred from homology"/>
<dbReference type="EMBL" id="CP000239">
    <property type="protein sequence ID" value="ABC99127.1"/>
    <property type="molecule type" value="Genomic_DNA"/>
</dbReference>
<dbReference type="RefSeq" id="WP_011429810.1">
    <property type="nucleotide sequence ID" value="NC_007775.1"/>
</dbReference>
<dbReference type="SMR" id="Q2JVV4"/>
<dbReference type="STRING" id="321327.CYA_0925"/>
<dbReference type="KEGG" id="cya:CYA_0925"/>
<dbReference type="eggNOG" id="COG0268">
    <property type="taxonomic scope" value="Bacteria"/>
</dbReference>
<dbReference type="HOGENOM" id="CLU_160655_5_0_3"/>
<dbReference type="OrthoDB" id="9808392at2"/>
<dbReference type="Proteomes" id="UP000008818">
    <property type="component" value="Chromosome"/>
</dbReference>
<dbReference type="GO" id="GO:0005829">
    <property type="term" value="C:cytosol"/>
    <property type="evidence" value="ECO:0007669"/>
    <property type="project" value="TreeGrafter"/>
</dbReference>
<dbReference type="GO" id="GO:0015935">
    <property type="term" value="C:small ribosomal subunit"/>
    <property type="evidence" value="ECO:0007669"/>
    <property type="project" value="TreeGrafter"/>
</dbReference>
<dbReference type="GO" id="GO:0070181">
    <property type="term" value="F:small ribosomal subunit rRNA binding"/>
    <property type="evidence" value="ECO:0007669"/>
    <property type="project" value="TreeGrafter"/>
</dbReference>
<dbReference type="GO" id="GO:0003735">
    <property type="term" value="F:structural constituent of ribosome"/>
    <property type="evidence" value="ECO:0007669"/>
    <property type="project" value="InterPro"/>
</dbReference>
<dbReference type="GO" id="GO:0006412">
    <property type="term" value="P:translation"/>
    <property type="evidence" value="ECO:0007669"/>
    <property type="project" value="UniProtKB-UniRule"/>
</dbReference>
<dbReference type="Gene3D" id="1.20.58.110">
    <property type="entry name" value="Ribosomal protein S20"/>
    <property type="match status" value="1"/>
</dbReference>
<dbReference type="HAMAP" id="MF_00500">
    <property type="entry name" value="Ribosomal_bS20"/>
    <property type="match status" value="1"/>
</dbReference>
<dbReference type="InterPro" id="IPR002583">
    <property type="entry name" value="Ribosomal_bS20"/>
</dbReference>
<dbReference type="InterPro" id="IPR036510">
    <property type="entry name" value="Ribosomal_bS20_sf"/>
</dbReference>
<dbReference type="NCBIfam" id="TIGR00029">
    <property type="entry name" value="S20"/>
    <property type="match status" value="1"/>
</dbReference>
<dbReference type="PANTHER" id="PTHR33398">
    <property type="entry name" value="30S RIBOSOMAL PROTEIN S20"/>
    <property type="match status" value="1"/>
</dbReference>
<dbReference type="PANTHER" id="PTHR33398:SF1">
    <property type="entry name" value="SMALL RIBOSOMAL SUBUNIT PROTEIN BS20C"/>
    <property type="match status" value="1"/>
</dbReference>
<dbReference type="Pfam" id="PF01649">
    <property type="entry name" value="Ribosomal_S20p"/>
    <property type="match status" value="1"/>
</dbReference>
<dbReference type="SUPFAM" id="SSF46992">
    <property type="entry name" value="Ribosomal protein S20"/>
    <property type="match status" value="1"/>
</dbReference>
<sequence length="100" mass="10960">MPRIKSAIKRVKIAERNRLRNKATKAMVRALMKKVTSLSSAYAANPQPETLQEIQAAMSAAFSRIDKAAKTGVLHKNTAARRKARLSRIVQRSLAATSAS</sequence>